<dbReference type="EMBL" id="K00053">
    <property type="protein sequence ID" value="AAA91589.1"/>
    <property type="molecule type" value="Genomic_DNA"/>
</dbReference>
<dbReference type="PIR" id="A23222">
    <property type="entry name" value="BVECRA"/>
</dbReference>
<dbReference type="SMR" id="P05833"/>
<dbReference type="DIP" id="DIP-16934N"/>
<dbReference type="IntAct" id="P05833">
    <property type="interactions" value="1"/>
</dbReference>
<dbReference type="GO" id="GO:0003887">
    <property type="term" value="F:DNA-directed DNA polymerase activity"/>
    <property type="evidence" value="ECO:0007669"/>
    <property type="project" value="InterPro"/>
</dbReference>
<dbReference type="GO" id="GO:0006270">
    <property type="term" value="P:DNA replication initiation"/>
    <property type="evidence" value="ECO:0007669"/>
    <property type="project" value="InterPro"/>
</dbReference>
<dbReference type="GO" id="GO:0006276">
    <property type="term" value="P:plasmid maintenance"/>
    <property type="evidence" value="ECO:0007669"/>
    <property type="project" value="UniProtKB-KW"/>
</dbReference>
<dbReference type="InterPro" id="IPR000525">
    <property type="entry name" value="Initiator_Rep_WH1"/>
</dbReference>
<dbReference type="Pfam" id="PF01051">
    <property type="entry name" value="Rep3_N"/>
    <property type="match status" value="1"/>
</dbReference>
<name>REPA_ECOLX</name>
<gene>
    <name type="primary">repA</name>
</gene>
<reference key="1">
    <citation type="journal article" date="1984" name="J. Bacteriol.">
        <title>Complete nucleotide sequence of mini-Rts1 and its copy mutant.</title>
        <authorList>
            <person name="Kamio Y."/>
            <person name="Tabuchi A."/>
            <person name="Itoh Y."/>
            <person name="Katagiri H."/>
            <person name="Terawaki Y."/>
        </authorList>
    </citation>
    <scope>NUCLEOTIDE SEQUENCE [GENOMIC DNA]</scope>
</reference>
<keyword id="KW-0235">DNA replication</keyword>
<keyword id="KW-0614">Plasmid</keyword>
<keyword id="KW-0615">Plasmid copy control</keyword>
<proteinExistence type="inferred from homology"/>
<protein>
    <recommendedName>
        <fullName>Protein RepA</fullName>
    </recommendedName>
</protein>
<feature type="chain" id="PRO_0000068300" description="Protein RepA">
    <location>
        <begin position="1"/>
        <end position="288"/>
    </location>
</feature>
<geneLocation type="plasmid">
    <name>mini-Rts1</name>
</geneLocation>
<comment type="function">
    <text>This protein is essential for plasmid replication; it is involved in copy control functions.</text>
</comment>
<comment type="similarity">
    <text evidence="1">Belongs to the initiator RepB protein family.</text>
</comment>
<sequence>METQLVISDVLFGNTEEKQKPLTVNELNTIQPVAFMRLGLFVPKPSRSSDYSPMIDVSELSSTFEFARLEGFTDIKITGERLDMDTDFKVWIGIVKAFSKYGISSNRIKLKFSEFAKDCGFPGKKLDKKLRAHIDESLRKIRGKSISFKRGKDSQSAYHTGLIKIAYFNADTDVVELEADERLWELYYFDYRVVLQLHAIKALPRLEVAQALYTFLASLPSNPAPISFERLRERLSLISQVKEQNRIIKKAITKLIDIGNLDASMVKKGQENYLIIHKRSPKLSVINE</sequence>
<accession>P05833</accession>
<organism>
    <name type="scientific">Escherichia coli</name>
    <dbReference type="NCBI Taxonomy" id="562"/>
    <lineage>
        <taxon>Bacteria</taxon>
        <taxon>Pseudomonadati</taxon>
        <taxon>Pseudomonadota</taxon>
        <taxon>Gammaproteobacteria</taxon>
        <taxon>Enterobacterales</taxon>
        <taxon>Enterobacteriaceae</taxon>
        <taxon>Escherichia</taxon>
    </lineage>
</organism>
<evidence type="ECO:0000305" key="1"/>